<sequence>MGKVRINVVKRTARKLLQMYPDLFTRDFEHNKKVVSQLIEVNSKKLRNQIAGYITHLKKVEERRQKVELREEYL</sequence>
<keyword id="KW-1185">Reference proteome</keyword>
<keyword id="KW-0687">Ribonucleoprotein</keyword>
<keyword id="KW-0689">Ribosomal protein</keyword>
<name>RS17E_IGNH4</name>
<reference key="1">
    <citation type="journal article" date="2008" name="Genome Biol.">
        <title>A genomic analysis of the archaeal system Ignicoccus hospitalis-Nanoarchaeum equitans.</title>
        <authorList>
            <person name="Podar M."/>
            <person name="Anderson I."/>
            <person name="Makarova K.S."/>
            <person name="Elkins J.G."/>
            <person name="Ivanova N."/>
            <person name="Wall M.A."/>
            <person name="Lykidis A."/>
            <person name="Mavromatis K."/>
            <person name="Sun H."/>
            <person name="Hudson M.E."/>
            <person name="Chen W."/>
            <person name="Deciu C."/>
            <person name="Hutchison D."/>
            <person name="Eads J.R."/>
            <person name="Anderson A."/>
            <person name="Fernandes F."/>
            <person name="Szeto E."/>
            <person name="Lapidus A."/>
            <person name="Kyrpides N.C."/>
            <person name="Saier M.H. Jr."/>
            <person name="Richardson P.M."/>
            <person name="Rachel R."/>
            <person name="Huber H."/>
            <person name="Eisen J.A."/>
            <person name="Koonin E.V."/>
            <person name="Keller M."/>
            <person name="Stetter K.O."/>
        </authorList>
    </citation>
    <scope>NUCLEOTIDE SEQUENCE [LARGE SCALE GENOMIC DNA]</scope>
    <source>
        <strain>KIN4/I / DSM 18386 / JCM 14125</strain>
    </source>
</reference>
<feature type="chain" id="PRO_1000050623" description="Small ribosomal subunit protein eS17">
    <location>
        <begin position="1"/>
        <end position="74"/>
    </location>
</feature>
<evidence type="ECO:0000255" key="1">
    <source>
        <dbReference type="HAMAP-Rule" id="MF_00511"/>
    </source>
</evidence>
<evidence type="ECO:0000305" key="2"/>
<comment type="similarity">
    <text evidence="1">Belongs to the eukaryotic ribosomal protein eS17 family.</text>
</comment>
<accession>A8A954</accession>
<dbReference type="EMBL" id="CP000816">
    <property type="protein sequence ID" value="ABU81456.1"/>
    <property type="molecule type" value="Genomic_DNA"/>
</dbReference>
<dbReference type="RefSeq" id="WP_011998308.1">
    <property type="nucleotide sequence ID" value="NC_009776.1"/>
</dbReference>
<dbReference type="SMR" id="A8A954"/>
<dbReference type="STRING" id="453591.Igni_0272"/>
<dbReference type="GeneID" id="5562934"/>
<dbReference type="KEGG" id="iho:Igni_0272"/>
<dbReference type="eggNOG" id="arCOG01885">
    <property type="taxonomic scope" value="Archaea"/>
</dbReference>
<dbReference type="HOGENOM" id="CLU_176720_2_0_2"/>
<dbReference type="OrthoDB" id="52479at2157"/>
<dbReference type="PhylomeDB" id="A8A954"/>
<dbReference type="Proteomes" id="UP000000262">
    <property type="component" value="Chromosome"/>
</dbReference>
<dbReference type="GO" id="GO:0005829">
    <property type="term" value="C:cytosol"/>
    <property type="evidence" value="ECO:0007669"/>
    <property type="project" value="UniProtKB-ARBA"/>
</dbReference>
<dbReference type="GO" id="GO:1990904">
    <property type="term" value="C:ribonucleoprotein complex"/>
    <property type="evidence" value="ECO:0007669"/>
    <property type="project" value="UniProtKB-KW"/>
</dbReference>
<dbReference type="GO" id="GO:0005840">
    <property type="term" value="C:ribosome"/>
    <property type="evidence" value="ECO:0007669"/>
    <property type="project" value="UniProtKB-KW"/>
</dbReference>
<dbReference type="GO" id="GO:0003735">
    <property type="term" value="F:structural constituent of ribosome"/>
    <property type="evidence" value="ECO:0007669"/>
    <property type="project" value="InterPro"/>
</dbReference>
<dbReference type="GO" id="GO:0006412">
    <property type="term" value="P:translation"/>
    <property type="evidence" value="ECO:0007669"/>
    <property type="project" value="UniProtKB-UniRule"/>
</dbReference>
<dbReference type="Gene3D" id="1.10.60.20">
    <property type="entry name" value="Ribosomal protein S17e-like"/>
    <property type="match status" value="1"/>
</dbReference>
<dbReference type="HAMAP" id="MF_00511">
    <property type="entry name" value="Ribosomal_eS17"/>
    <property type="match status" value="1"/>
</dbReference>
<dbReference type="InterPro" id="IPR001210">
    <property type="entry name" value="Ribosomal_eS17"/>
</dbReference>
<dbReference type="InterPro" id="IPR018273">
    <property type="entry name" value="Ribosomal_eS17_CS"/>
</dbReference>
<dbReference type="InterPro" id="IPR036401">
    <property type="entry name" value="Ribosomal_eS17_sf"/>
</dbReference>
<dbReference type="NCBIfam" id="NF002242">
    <property type="entry name" value="PRK01151.1"/>
    <property type="match status" value="1"/>
</dbReference>
<dbReference type="PANTHER" id="PTHR10732">
    <property type="entry name" value="40S RIBOSOMAL PROTEIN S17"/>
    <property type="match status" value="1"/>
</dbReference>
<dbReference type="PANTHER" id="PTHR10732:SF0">
    <property type="entry name" value="40S RIBOSOMAL PROTEIN S17"/>
    <property type="match status" value="1"/>
</dbReference>
<dbReference type="Pfam" id="PF00833">
    <property type="entry name" value="Ribosomal_S17e"/>
    <property type="match status" value="1"/>
</dbReference>
<dbReference type="SUPFAM" id="SSF116820">
    <property type="entry name" value="Rps17e-like"/>
    <property type="match status" value="1"/>
</dbReference>
<dbReference type="PROSITE" id="PS00712">
    <property type="entry name" value="RIBOSOMAL_S17E"/>
    <property type="match status" value="1"/>
</dbReference>
<organism>
    <name type="scientific">Ignicoccus hospitalis (strain KIN4/I / DSM 18386 / JCM 14125)</name>
    <dbReference type="NCBI Taxonomy" id="453591"/>
    <lineage>
        <taxon>Archaea</taxon>
        <taxon>Thermoproteota</taxon>
        <taxon>Thermoprotei</taxon>
        <taxon>Desulfurococcales</taxon>
        <taxon>Desulfurococcaceae</taxon>
        <taxon>Ignicoccus</taxon>
    </lineage>
</organism>
<gene>
    <name evidence="1" type="primary">rps17e</name>
    <name type="ordered locus">Igni_0272</name>
</gene>
<protein>
    <recommendedName>
        <fullName evidence="1">Small ribosomal subunit protein eS17</fullName>
    </recommendedName>
    <alternativeName>
        <fullName evidence="2">30S ribosomal protein S17e</fullName>
    </alternativeName>
</protein>
<proteinExistence type="inferred from homology"/>